<reference key="1">
    <citation type="submission" date="2008-02" db="EMBL/GenBank/DDBJ databases">
        <title>Complete sequence of Escherichia coli C str. ATCC 8739.</title>
        <authorList>
            <person name="Copeland A."/>
            <person name="Lucas S."/>
            <person name="Lapidus A."/>
            <person name="Glavina del Rio T."/>
            <person name="Dalin E."/>
            <person name="Tice H."/>
            <person name="Bruce D."/>
            <person name="Goodwin L."/>
            <person name="Pitluck S."/>
            <person name="Kiss H."/>
            <person name="Brettin T."/>
            <person name="Detter J.C."/>
            <person name="Han C."/>
            <person name="Kuske C.R."/>
            <person name="Schmutz J."/>
            <person name="Larimer F."/>
            <person name="Land M."/>
            <person name="Hauser L."/>
            <person name="Kyrpides N."/>
            <person name="Mikhailova N."/>
            <person name="Ingram L."/>
            <person name="Richardson P."/>
        </authorList>
    </citation>
    <scope>NUCLEOTIDE SEQUENCE [LARGE SCALE GENOMIC DNA]</scope>
    <source>
        <strain>ATCC 8739 / DSM 1576 / NBRC 3972 / NCIMB 8545 / WDCM 00012 / Crooks</strain>
    </source>
</reference>
<sequence length="482" mass="54987">MKFIIKLFPEITIKSQSVRLRFIKILTGNIRNVLKHYDETLAVVRHWDNIEVRAKDENQRLAIRDALTRIPGIHHILEVEDVPFTDMHDIFEKALVQYRDQLEGKTFCVRVKRRGKHDFSSIDVERYVGGGLNQHIESARVKLTNPEVTVHLEVEDDRLLLIKGRYEGIGGFPIGTQEDVLSLISGGFDSGVSSYMLMRRGCRVHYCFFNLGGAAHEIGVRQVAHYLWNRFGSSHRVRFVAINFEPVVGEILEKIDDGQMGVILKRMMVRAASKVAERYGVQALVTGEALGQVSSQTLTNLRLIDNVSDTLILRPLISYDKEHIINLARQIGTEDFARTMPEYCGVISKSPTVKAVKSKIEAEEEKFDFSILDKVVEEANNVDIREIAQQTEQEVVEVETVNGFGPNDVILDIRSIDEQEDKPLKVEGIDVVSLPFYKLSTKFGDLDQNKTWLLWCERGVMSRLQALYLREQGFNNVKVYRP</sequence>
<comment type="function">
    <text evidence="1">Catalyzes the ATP-dependent transfer of a sulfur to tRNA to produce 4-thiouridine in position 8 of tRNAs, which functions as a near-UV photosensor. Also catalyzes the transfer of sulfur to the sulfur carrier protein ThiS, forming ThiS-thiocarboxylate. This is a step in the synthesis of thiazole, in the thiamine biosynthesis pathway. The sulfur is donated as persulfide by IscS.</text>
</comment>
<comment type="catalytic activity">
    <reaction evidence="1">
        <text>[ThiI sulfur-carrier protein]-S-sulfanyl-L-cysteine + a uridine in tRNA + 2 reduced [2Fe-2S]-[ferredoxin] + ATP + H(+) = [ThiI sulfur-carrier protein]-L-cysteine + a 4-thiouridine in tRNA + 2 oxidized [2Fe-2S]-[ferredoxin] + AMP + diphosphate</text>
        <dbReference type="Rhea" id="RHEA:24176"/>
        <dbReference type="Rhea" id="RHEA-COMP:10000"/>
        <dbReference type="Rhea" id="RHEA-COMP:10001"/>
        <dbReference type="Rhea" id="RHEA-COMP:13337"/>
        <dbReference type="Rhea" id="RHEA-COMP:13338"/>
        <dbReference type="Rhea" id="RHEA-COMP:13339"/>
        <dbReference type="Rhea" id="RHEA-COMP:13340"/>
        <dbReference type="ChEBI" id="CHEBI:15378"/>
        <dbReference type="ChEBI" id="CHEBI:29950"/>
        <dbReference type="ChEBI" id="CHEBI:30616"/>
        <dbReference type="ChEBI" id="CHEBI:33019"/>
        <dbReference type="ChEBI" id="CHEBI:33737"/>
        <dbReference type="ChEBI" id="CHEBI:33738"/>
        <dbReference type="ChEBI" id="CHEBI:61963"/>
        <dbReference type="ChEBI" id="CHEBI:65315"/>
        <dbReference type="ChEBI" id="CHEBI:136798"/>
        <dbReference type="ChEBI" id="CHEBI:456215"/>
        <dbReference type="EC" id="2.8.1.4"/>
    </reaction>
</comment>
<comment type="catalytic activity">
    <reaction evidence="1">
        <text>[ThiS sulfur-carrier protein]-C-terminal Gly-Gly-AMP + S-sulfanyl-L-cysteinyl-[cysteine desulfurase] + AH2 = [ThiS sulfur-carrier protein]-C-terminal-Gly-aminoethanethioate + L-cysteinyl-[cysteine desulfurase] + A + AMP + 2 H(+)</text>
        <dbReference type="Rhea" id="RHEA:43340"/>
        <dbReference type="Rhea" id="RHEA-COMP:12157"/>
        <dbReference type="Rhea" id="RHEA-COMP:12158"/>
        <dbReference type="Rhea" id="RHEA-COMP:12910"/>
        <dbReference type="Rhea" id="RHEA-COMP:19908"/>
        <dbReference type="ChEBI" id="CHEBI:13193"/>
        <dbReference type="ChEBI" id="CHEBI:15378"/>
        <dbReference type="ChEBI" id="CHEBI:17499"/>
        <dbReference type="ChEBI" id="CHEBI:29950"/>
        <dbReference type="ChEBI" id="CHEBI:61963"/>
        <dbReference type="ChEBI" id="CHEBI:90618"/>
        <dbReference type="ChEBI" id="CHEBI:232372"/>
        <dbReference type="ChEBI" id="CHEBI:456215"/>
    </reaction>
</comment>
<comment type="pathway">
    <text evidence="1">Cofactor biosynthesis; thiamine diphosphate biosynthesis.</text>
</comment>
<comment type="subcellular location">
    <subcellularLocation>
        <location evidence="1">Cytoplasm</location>
    </subcellularLocation>
</comment>
<comment type="similarity">
    <text evidence="1">Belongs to the ThiI family.</text>
</comment>
<accession>B1J026</accession>
<name>THII_ECOLC</name>
<protein>
    <recommendedName>
        <fullName evidence="1">tRNA sulfurtransferase</fullName>
        <ecNumber evidence="1">2.8.1.4</ecNumber>
    </recommendedName>
    <alternativeName>
        <fullName evidence="1">Sulfur carrier protein ThiS sulfurtransferase</fullName>
    </alternativeName>
    <alternativeName>
        <fullName evidence="1">Thiamine biosynthesis protein ThiI</fullName>
    </alternativeName>
    <alternativeName>
        <fullName evidence="1">tRNA 4-thiouridine synthase</fullName>
    </alternativeName>
</protein>
<evidence type="ECO:0000255" key="1">
    <source>
        <dbReference type="HAMAP-Rule" id="MF_00021"/>
    </source>
</evidence>
<organism>
    <name type="scientific">Escherichia coli (strain ATCC 8739 / DSM 1576 / NBRC 3972 / NCIMB 8545 / WDCM 00012 / Crooks)</name>
    <dbReference type="NCBI Taxonomy" id="481805"/>
    <lineage>
        <taxon>Bacteria</taxon>
        <taxon>Pseudomonadati</taxon>
        <taxon>Pseudomonadota</taxon>
        <taxon>Gammaproteobacteria</taxon>
        <taxon>Enterobacterales</taxon>
        <taxon>Enterobacteriaceae</taxon>
        <taxon>Escherichia</taxon>
    </lineage>
</organism>
<dbReference type="EC" id="2.8.1.4" evidence="1"/>
<dbReference type="EMBL" id="CP000946">
    <property type="protein sequence ID" value="ACA78832.1"/>
    <property type="molecule type" value="Genomic_DNA"/>
</dbReference>
<dbReference type="RefSeq" id="WP_000668682.1">
    <property type="nucleotide sequence ID" value="NZ_MTFT01000010.1"/>
</dbReference>
<dbReference type="SMR" id="B1J026"/>
<dbReference type="KEGG" id="ecl:EcolC_3210"/>
<dbReference type="HOGENOM" id="CLU_037952_4_1_6"/>
<dbReference type="UniPathway" id="UPA00060"/>
<dbReference type="GO" id="GO:0005829">
    <property type="term" value="C:cytosol"/>
    <property type="evidence" value="ECO:0007669"/>
    <property type="project" value="TreeGrafter"/>
</dbReference>
<dbReference type="GO" id="GO:0005524">
    <property type="term" value="F:ATP binding"/>
    <property type="evidence" value="ECO:0007669"/>
    <property type="project" value="UniProtKB-UniRule"/>
</dbReference>
<dbReference type="GO" id="GO:0004810">
    <property type="term" value="F:CCA tRNA nucleotidyltransferase activity"/>
    <property type="evidence" value="ECO:0007669"/>
    <property type="project" value="InterPro"/>
</dbReference>
<dbReference type="GO" id="GO:0000049">
    <property type="term" value="F:tRNA binding"/>
    <property type="evidence" value="ECO:0007669"/>
    <property type="project" value="UniProtKB-UniRule"/>
</dbReference>
<dbReference type="GO" id="GO:0140741">
    <property type="term" value="F:tRNA-uracil-4 sulfurtransferase activity"/>
    <property type="evidence" value="ECO:0007669"/>
    <property type="project" value="UniProtKB-EC"/>
</dbReference>
<dbReference type="GO" id="GO:0009228">
    <property type="term" value="P:thiamine biosynthetic process"/>
    <property type="evidence" value="ECO:0007669"/>
    <property type="project" value="UniProtKB-KW"/>
</dbReference>
<dbReference type="GO" id="GO:0009229">
    <property type="term" value="P:thiamine diphosphate biosynthetic process"/>
    <property type="evidence" value="ECO:0007669"/>
    <property type="project" value="UniProtKB-UniRule"/>
</dbReference>
<dbReference type="GO" id="GO:0052837">
    <property type="term" value="P:thiazole biosynthetic process"/>
    <property type="evidence" value="ECO:0007669"/>
    <property type="project" value="InterPro"/>
</dbReference>
<dbReference type="GO" id="GO:0002937">
    <property type="term" value="P:tRNA 4-thiouridine biosynthesis"/>
    <property type="evidence" value="ECO:0007669"/>
    <property type="project" value="TreeGrafter"/>
</dbReference>
<dbReference type="CDD" id="cd01712">
    <property type="entry name" value="PPase_ThiI"/>
    <property type="match status" value="1"/>
</dbReference>
<dbReference type="CDD" id="cd00158">
    <property type="entry name" value="RHOD"/>
    <property type="match status" value="1"/>
</dbReference>
<dbReference type="CDD" id="cd11716">
    <property type="entry name" value="THUMP_ThiI"/>
    <property type="match status" value="1"/>
</dbReference>
<dbReference type="FunFam" id="3.30.2130.30:FF:000002">
    <property type="entry name" value="tRNA sulfurtransferase"/>
    <property type="match status" value="1"/>
</dbReference>
<dbReference type="FunFam" id="3.40.250.10:FF:000003">
    <property type="entry name" value="tRNA sulfurtransferase"/>
    <property type="match status" value="1"/>
</dbReference>
<dbReference type="FunFam" id="3.40.50.620:FF:000029">
    <property type="entry name" value="tRNA sulfurtransferase"/>
    <property type="match status" value="1"/>
</dbReference>
<dbReference type="Gene3D" id="3.30.2130.30">
    <property type="match status" value="1"/>
</dbReference>
<dbReference type="Gene3D" id="3.40.50.620">
    <property type="entry name" value="HUPs"/>
    <property type="match status" value="1"/>
</dbReference>
<dbReference type="Gene3D" id="3.40.250.10">
    <property type="entry name" value="Rhodanese-like domain"/>
    <property type="match status" value="1"/>
</dbReference>
<dbReference type="HAMAP" id="MF_00021">
    <property type="entry name" value="ThiI"/>
    <property type="match status" value="1"/>
</dbReference>
<dbReference type="InterPro" id="IPR001763">
    <property type="entry name" value="Rhodanese-like_dom"/>
</dbReference>
<dbReference type="InterPro" id="IPR036873">
    <property type="entry name" value="Rhodanese-like_dom_sf"/>
</dbReference>
<dbReference type="InterPro" id="IPR014729">
    <property type="entry name" value="Rossmann-like_a/b/a_fold"/>
</dbReference>
<dbReference type="InterPro" id="IPR020536">
    <property type="entry name" value="ThiI_AANH"/>
</dbReference>
<dbReference type="InterPro" id="IPR054173">
    <property type="entry name" value="ThiI_fer"/>
</dbReference>
<dbReference type="InterPro" id="IPR049961">
    <property type="entry name" value="ThiI_N"/>
</dbReference>
<dbReference type="InterPro" id="IPR026340">
    <property type="entry name" value="THII_Thiazole_biosynth_dom"/>
</dbReference>
<dbReference type="InterPro" id="IPR004114">
    <property type="entry name" value="THUMP_dom"/>
</dbReference>
<dbReference type="InterPro" id="IPR049962">
    <property type="entry name" value="THUMP_ThiI"/>
</dbReference>
<dbReference type="InterPro" id="IPR003720">
    <property type="entry name" value="tRNA_STrfase"/>
</dbReference>
<dbReference type="InterPro" id="IPR050102">
    <property type="entry name" value="tRNA_sulfurtransferase_ThiI"/>
</dbReference>
<dbReference type="NCBIfam" id="TIGR04271">
    <property type="entry name" value="ThiI_C_thiazole"/>
    <property type="match status" value="1"/>
</dbReference>
<dbReference type="NCBIfam" id="TIGR00342">
    <property type="entry name" value="tRNA uracil 4-sulfurtransferase ThiI"/>
    <property type="match status" value="1"/>
</dbReference>
<dbReference type="PANTHER" id="PTHR43209">
    <property type="entry name" value="TRNA SULFURTRANSFERASE"/>
    <property type="match status" value="1"/>
</dbReference>
<dbReference type="PANTHER" id="PTHR43209:SF1">
    <property type="entry name" value="TRNA SULFURTRANSFERASE"/>
    <property type="match status" value="1"/>
</dbReference>
<dbReference type="Pfam" id="PF02568">
    <property type="entry name" value="ThiI"/>
    <property type="match status" value="1"/>
</dbReference>
<dbReference type="Pfam" id="PF22025">
    <property type="entry name" value="ThiI_fer"/>
    <property type="match status" value="1"/>
</dbReference>
<dbReference type="Pfam" id="PF02926">
    <property type="entry name" value="THUMP"/>
    <property type="match status" value="1"/>
</dbReference>
<dbReference type="SMART" id="SM00981">
    <property type="entry name" value="THUMP"/>
    <property type="match status" value="1"/>
</dbReference>
<dbReference type="SUPFAM" id="SSF52402">
    <property type="entry name" value="Adenine nucleotide alpha hydrolases-like"/>
    <property type="match status" value="1"/>
</dbReference>
<dbReference type="SUPFAM" id="SSF52821">
    <property type="entry name" value="Rhodanese/Cell cycle control phosphatase"/>
    <property type="match status" value="1"/>
</dbReference>
<dbReference type="SUPFAM" id="SSF143437">
    <property type="entry name" value="THUMP domain-like"/>
    <property type="match status" value="1"/>
</dbReference>
<dbReference type="PROSITE" id="PS50206">
    <property type="entry name" value="RHODANESE_3"/>
    <property type="match status" value="1"/>
</dbReference>
<dbReference type="PROSITE" id="PS51165">
    <property type="entry name" value="THUMP"/>
    <property type="match status" value="1"/>
</dbReference>
<proteinExistence type="inferred from homology"/>
<feature type="chain" id="PRO_1000074222" description="tRNA sulfurtransferase">
    <location>
        <begin position="1"/>
        <end position="482"/>
    </location>
</feature>
<feature type="domain" description="THUMP" evidence="1">
    <location>
        <begin position="61"/>
        <end position="165"/>
    </location>
</feature>
<feature type="domain" description="Rhodanese" evidence="1">
    <location>
        <begin position="404"/>
        <end position="482"/>
    </location>
</feature>
<feature type="active site" description="Cysteine persulfide intermediate" evidence="1">
    <location>
        <position position="456"/>
    </location>
</feature>
<feature type="binding site" evidence="1">
    <location>
        <begin position="183"/>
        <end position="184"/>
    </location>
    <ligand>
        <name>ATP</name>
        <dbReference type="ChEBI" id="CHEBI:30616"/>
    </ligand>
</feature>
<feature type="binding site" evidence="1">
    <location>
        <position position="265"/>
    </location>
    <ligand>
        <name>ATP</name>
        <dbReference type="ChEBI" id="CHEBI:30616"/>
    </ligand>
</feature>
<feature type="binding site" evidence="1">
    <location>
        <position position="287"/>
    </location>
    <ligand>
        <name>ATP</name>
        <dbReference type="ChEBI" id="CHEBI:30616"/>
    </ligand>
</feature>
<feature type="binding site" evidence="1">
    <location>
        <position position="296"/>
    </location>
    <ligand>
        <name>ATP</name>
        <dbReference type="ChEBI" id="CHEBI:30616"/>
    </ligand>
</feature>
<feature type="disulfide bond" description="Redox-active" evidence="1">
    <location>
        <begin position="344"/>
        <end position="456"/>
    </location>
</feature>
<gene>
    <name evidence="1" type="primary">thiI</name>
    <name type="ordered locus">EcolC_3210</name>
</gene>
<keyword id="KW-0067">ATP-binding</keyword>
<keyword id="KW-0963">Cytoplasm</keyword>
<keyword id="KW-1015">Disulfide bond</keyword>
<keyword id="KW-0547">Nucleotide-binding</keyword>
<keyword id="KW-0676">Redox-active center</keyword>
<keyword id="KW-0694">RNA-binding</keyword>
<keyword id="KW-0784">Thiamine biosynthesis</keyword>
<keyword id="KW-0808">Transferase</keyword>
<keyword id="KW-0820">tRNA-binding</keyword>